<feature type="chain" id="PRO_0000230959" description="Transaldolase">
    <location>
        <begin position="1"/>
        <end position="333"/>
    </location>
</feature>
<feature type="active site" description="Schiff-base intermediate with substrate" evidence="2">
    <location>
        <position position="135"/>
    </location>
</feature>
<feature type="helix" evidence="3">
    <location>
        <begin position="4"/>
        <end position="9"/>
    </location>
</feature>
<feature type="strand" evidence="3">
    <location>
        <begin position="12"/>
        <end position="16"/>
    </location>
</feature>
<feature type="helix" evidence="3">
    <location>
        <begin position="21"/>
        <end position="27"/>
    </location>
</feature>
<feature type="strand" evidence="3">
    <location>
        <begin position="30"/>
        <end position="34"/>
    </location>
</feature>
<feature type="helix" evidence="3">
    <location>
        <begin position="36"/>
        <end position="42"/>
    </location>
</feature>
<feature type="turn" evidence="3">
    <location>
        <begin position="46"/>
        <end position="48"/>
    </location>
</feature>
<feature type="helix" evidence="3">
    <location>
        <begin position="49"/>
        <end position="62"/>
    </location>
</feature>
<feature type="helix" evidence="3">
    <location>
        <begin position="69"/>
        <end position="89"/>
    </location>
</feature>
<feature type="strand" evidence="3">
    <location>
        <begin position="96"/>
        <end position="99"/>
    </location>
</feature>
<feature type="helix" evidence="3">
    <location>
        <begin position="102"/>
        <end position="104"/>
    </location>
</feature>
<feature type="helix" evidence="3">
    <location>
        <begin position="108"/>
        <end position="124"/>
    </location>
</feature>
<feature type="helix" evidence="3">
    <location>
        <begin position="129"/>
        <end position="131"/>
    </location>
</feature>
<feature type="strand" evidence="3">
    <location>
        <begin position="132"/>
        <end position="137"/>
    </location>
</feature>
<feature type="helix" evidence="3">
    <location>
        <begin position="140"/>
        <end position="151"/>
    </location>
</feature>
<feature type="strand" evidence="3">
    <location>
        <begin position="156"/>
        <end position="160"/>
    </location>
</feature>
<feature type="helix" evidence="3">
    <location>
        <begin position="164"/>
        <end position="172"/>
    </location>
</feature>
<feature type="strand" evidence="3">
    <location>
        <begin position="176"/>
        <end position="178"/>
    </location>
</feature>
<feature type="helix" evidence="3">
    <location>
        <begin position="182"/>
        <end position="193"/>
    </location>
</feature>
<feature type="helix" evidence="3">
    <location>
        <begin position="200"/>
        <end position="202"/>
    </location>
</feature>
<feature type="helix" evidence="3">
    <location>
        <begin position="204"/>
        <end position="219"/>
    </location>
</feature>
<feature type="strand" evidence="3">
    <location>
        <begin position="224"/>
        <end position="228"/>
    </location>
</feature>
<feature type="helix" evidence="3">
    <location>
        <begin position="233"/>
        <end position="238"/>
    </location>
</feature>
<feature type="turn" evidence="3">
    <location>
        <begin position="239"/>
        <end position="241"/>
    </location>
</feature>
<feature type="strand" evidence="3">
    <location>
        <begin position="243"/>
        <end position="247"/>
    </location>
</feature>
<feature type="helix" evidence="3">
    <location>
        <begin position="249"/>
        <end position="257"/>
    </location>
</feature>
<feature type="helix" evidence="3">
    <location>
        <begin position="282"/>
        <end position="291"/>
    </location>
</feature>
<feature type="helix" evidence="3">
    <location>
        <begin position="293"/>
        <end position="330"/>
    </location>
</feature>
<name>TAL_PROM9</name>
<gene>
    <name evidence="2" type="primary">tal</name>
    <name type="ordered locus">PMT9312_0519</name>
</gene>
<comment type="function">
    <text evidence="2">Transaldolase is important for the balance of metabolites in the pentose-phosphate pathway.</text>
</comment>
<comment type="catalytic activity">
    <reaction evidence="2">
        <text>D-sedoheptulose 7-phosphate + D-glyceraldehyde 3-phosphate = D-erythrose 4-phosphate + beta-D-fructose 6-phosphate</text>
        <dbReference type="Rhea" id="RHEA:17053"/>
        <dbReference type="ChEBI" id="CHEBI:16897"/>
        <dbReference type="ChEBI" id="CHEBI:57483"/>
        <dbReference type="ChEBI" id="CHEBI:57634"/>
        <dbReference type="ChEBI" id="CHEBI:59776"/>
        <dbReference type="EC" id="2.2.1.2"/>
    </reaction>
</comment>
<comment type="pathway">
    <text evidence="2">Carbohydrate degradation; pentose phosphate pathway; D-glyceraldehyde 3-phosphate and beta-D-fructose 6-phosphate from D-ribose 5-phosphate and D-xylulose 5-phosphate (non-oxidative stage): step 2/3.</text>
</comment>
<comment type="subunit">
    <text evidence="1">Homodimer.</text>
</comment>
<comment type="subcellular location">
    <subcellularLocation>
        <location evidence="2">Cytoplasm</location>
    </subcellularLocation>
</comment>
<comment type="similarity">
    <text evidence="2">Belongs to the transaldolase family. Type 1 subfamily.</text>
</comment>
<reference key="1">
    <citation type="journal article" date="2006" name="Science">
        <title>Genomic islands and the ecology and evolution of Prochlorococcus.</title>
        <authorList>
            <person name="Coleman M.L."/>
            <person name="Sullivan M.B."/>
            <person name="Martiny A.C."/>
            <person name="Steglich C."/>
            <person name="Barry K."/>
            <person name="Delong E.F."/>
            <person name="Chisholm S.W."/>
        </authorList>
    </citation>
    <scope>NUCLEOTIDE SEQUENCE [LARGE SCALE GENOMIC DNA]</scope>
    <source>
        <strain>MIT 9312</strain>
    </source>
</reference>
<accession>Q31C15</accession>
<protein>
    <recommendedName>
        <fullName evidence="2">Transaldolase</fullName>
        <ecNumber evidence="2">2.2.1.2</ecNumber>
    </recommendedName>
</protein>
<dbReference type="EC" id="2.2.1.2" evidence="2"/>
<dbReference type="EMBL" id="CP000111">
    <property type="protein sequence ID" value="ABB49580.1"/>
    <property type="molecule type" value="Genomic_DNA"/>
</dbReference>
<dbReference type="RefSeq" id="WP_011376078.1">
    <property type="nucleotide sequence ID" value="NC_007577.1"/>
</dbReference>
<dbReference type="PDB" id="3HJZ">
    <property type="method" value="X-ray"/>
    <property type="resolution" value="1.90 A"/>
    <property type="chains" value="A=1-333"/>
</dbReference>
<dbReference type="PDBsum" id="3HJZ"/>
<dbReference type="SMR" id="Q31C15"/>
<dbReference type="STRING" id="74546.PMT9312_0519"/>
<dbReference type="KEGG" id="pmi:PMT9312_0519"/>
<dbReference type="eggNOG" id="COG0176">
    <property type="taxonomic scope" value="Bacteria"/>
</dbReference>
<dbReference type="HOGENOM" id="CLU_047470_0_1_3"/>
<dbReference type="OrthoDB" id="9807051at2"/>
<dbReference type="UniPathway" id="UPA00115">
    <property type="reaction ID" value="UER00414"/>
</dbReference>
<dbReference type="EvolutionaryTrace" id="Q31C15"/>
<dbReference type="Proteomes" id="UP000002715">
    <property type="component" value="Chromosome"/>
</dbReference>
<dbReference type="GO" id="GO:0005737">
    <property type="term" value="C:cytoplasm"/>
    <property type="evidence" value="ECO:0007669"/>
    <property type="project" value="UniProtKB-SubCell"/>
</dbReference>
<dbReference type="GO" id="GO:0004801">
    <property type="term" value="F:transaldolase activity"/>
    <property type="evidence" value="ECO:0000250"/>
    <property type="project" value="UniProtKB"/>
</dbReference>
<dbReference type="GO" id="GO:0005975">
    <property type="term" value="P:carbohydrate metabolic process"/>
    <property type="evidence" value="ECO:0007669"/>
    <property type="project" value="InterPro"/>
</dbReference>
<dbReference type="GO" id="GO:0006098">
    <property type="term" value="P:pentose-phosphate shunt"/>
    <property type="evidence" value="ECO:0007669"/>
    <property type="project" value="UniProtKB-UniRule"/>
</dbReference>
<dbReference type="CDD" id="cd00957">
    <property type="entry name" value="Transaldolase_TalAB"/>
    <property type="match status" value="1"/>
</dbReference>
<dbReference type="FunFam" id="3.20.20.70:FF:000131">
    <property type="entry name" value="Transaldolase"/>
    <property type="match status" value="1"/>
</dbReference>
<dbReference type="Gene3D" id="3.20.20.70">
    <property type="entry name" value="Aldolase class I"/>
    <property type="match status" value="1"/>
</dbReference>
<dbReference type="HAMAP" id="MF_00492">
    <property type="entry name" value="Transaldolase_1"/>
    <property type="match status" value="1"/>
</dbReference>
<dbReference type="InterPro" id="IPR013785">
    <property type="entry name" value="Aldolase_TIM"/>
</dbReference>
<dbReference type="InterPro" id="IPR001585">
    <property type="entry name" value="TAL/FSA"/>
</dbReference>
<dbReference type="InterPro" id="IPR004730">
    <property type="entry name" value="Transaldolase_1"/>
</dbReference>
<dbReference type="InterPro" id="IPR018225">
    <property type="entry name" value="Transaldolase_AS"/>
</dbReference>
<dbReference type="NCBIfam" id="TIGR00874">
    <property type="entry name" value="talAB"/>
    <property type="match status" value="1"/>
</dbReference>
<dbReference type="PANTHER" id="PTHR10683">
    <property type="entry name" value="TRANSALDOLASE"/>
    <property type="match status" value="1"/>
</dbReference>
<dbReference type="PANTHER" id="PTHR10683:SF18">
    <property type="entry name" value="TRANSALDOLASE"/>
    <property type="match status" value="1"/>
</dbReference>
<dbReference type="Pfam" id="PF00923">
    <property type="entry name" value="TAL_FSA"/>
    <property type="match status" value="1"/>
</dbReference>
<dbReference type="SUPFAM" id="SSF51569">
    <property type="entry name" value="Aldolase"/>
    <property type="match status" value="1"/>
</dbReference>
<dbReference type="PROSITE" id="PS01054">
    <property type="entry name" value="TRANSALDOLASE_1"/>
    <property type="match status" value="1"/>
</dbReference>
<dbReference type="PROSITE" id="PS00958">
    <property type="entry name" value="TRANSALDOLASE_2"/>
    <property type="match status" value="1"/>
</dbReference>
<organism>
    <name type="scientific">Prochlorococcus marinus (strain MIT 9312)</name>
    <dbReference type="NCBI Taxonomy" id="74546"/>
    <lineage>
        <taxon>Bacteria</taxon>
        <taxon>Bacillati</taxon>
        <taxon>Cyanobacteriota</taxon>
        <taxon>Cyanophyceae</taxon>
        <taxon>Synechococcales</taxon>
        <taxon>Prochlorococcaceae</taxon>
        <taxon>Prochlorococcus</taxon>
    </lineage>
</organism>
<proteinExistence type="evidence at protein level"/>
<sequence length="333" mass="37289">MKSILEQLSSMTVVVADTGDLDSIKKFQPRDATTNPSLILAAAKNPDYVKLIDKAIESSENTLPNGFSEIELIKETVDQVSVFFGKEILKIISGRVSTEVDARLSFDTEATVKKARKLINLYKNFGIEKERILIKIAATWEGIKAAEILEKEGIKCNLTLLFNFCQAVTCANANITLISPFVGRILDWHKAKTGKTSFIGAEDPGVISVTQIYKYFKEKGFKTEVMGASFRNLDEIKELAGCDLLTIAPKFLEELKREKGVLIRKLDASTKINNSIDYKFEEKDFRLSMLEDQMASEKLSEGITGFSKAIEELEELLIERLSEMKNHKLISAN</sequence>
<evidence type="ECO:0000250" key="1"/>
<evidence type="ECO:0000255" key="2">
    <source>
        <dbReference type="HAMAP-Rule" id="MF_00492"/>
    </source>
</evidence>
<evidence type="ECO:0007829" key="3">
    <source>
        <dbReference type="PDB" id="3HJZ"/>
    </source>
</evidence>
<keyword id="KW-0002">3D-structure</keyword>
<keyword id="KW-0963">Cytoplasm</keyword>
<keyword id="KW-0570">Pentose shunt</keyword>
<keyword id="KW-0704">Schiff base</keyword>
<keyword id="KW-0808">Transferase</keyword>